<proteinExistence type="inferred from homology"/>
<gene>
    <name evidence="2" type="primary">deoD</name>
    <name type="ordered locus">Amet_4228</name>
</gene>
<comment type="function">
    <text evidence="2">Catalyzes the reversible phosphorolytic breakdown of the N-glycosidic bond in the beta-(deoxy)ribonucleoside molecules, with the formation of the corresponding free purine bases and pentose-1-phosphate.</text>
</comment>
<comment type="catalytic activity">
    <reaction evidence="2">
        <text>a purine D-ribonucleoside + phosphate = a purine nucleobase + alpha-D-ribose 1-phosphate</text>
        <dbReference type="Rhea" id="RHEA:19805"/>
        <dbReference type="ChEBI" id="CHEBI:26386"/>
        <dbReference type="ChEBI" id="CHEBI:43474"/>
        <dbReference type="ChEBI" id="CHEBI:57720"/>
        <dbReference type="ChEBI" id="CHEBI:142355"/>
        <dbReference type="EC" id="2.4.2.1"/>
    </reaction>
</comment>
<comment type="catalytic activity">
    <reaction evidence="2">
        <text>a purine 2'-deoxy-D-ribonucleoside + phosphate = a purine nucleobase + 2-deoxy-alpha-D-ribose 1-phosphate</text>
        <dbReference type="Rhea" id="RHEA:36431"/>
        <dbReference type="ChEBI" id="CHEBI:26386"/>
        <dbReference type="ChEBI" id="CHEBI:43474"/>
        <dbReference type="ChEBI" id="CHEBI:57259"/>
        <dbReference type="ChEBI" id="CHEBI:142361"/>
        <dbReference type="EC" id="2.4.2.1"/>
    </reaction>
</comment>
<comment type="subunit">
    <text evidence="2">Homohexamer; trimer of homodimers.</text>
</comment>
<comment type="similarity">
    <text evidence="2">Belongs to the PNP/UDP phosphorylase family.</text>
</comment>
<evidence type="ECO:0000250" key="1">
    <source>
        <dbReference type="UniProtKB" id="P50389"/>
    </source>
</evidence>
<evidence type="ECO:0000255" key="2">
    <source>
        <dbReference type="HAMAP-Rule" id="MF_01627"/>
    </source>
</evidence>
<accession>A6TVU0</accession>
<feature type="chain" id="PRO_1000069617" description="Purine nucleoside phosphorylase DeoD-type">
    <location>
        <begin position="1"/>
        <end position="233"/>
    </location>
</feature>
<feature type="active site" description="Proton donor" evidence="2">
    <location>
        <position position="204"/>
    </location>
</feature>
<feature type="binding site" evidence="1">
    <location>
        <position position="4"/>
    </location>
    <ligand>
        <name>a purine D-ribonucleoside</name>
        <dbReference type="ChEBI" id="CHEBI:142355"/>
        <note>ligand shared between dimeric partners</note>
    </ligand>
</feature>
<feature type="binding site" description="in other chain" evidence="1">
    <location>
        <position position="20"/>
    </location>
    <ligand>
        <name>phosphate</name>
        <dbReference type="ChEBI" id="CHEBI:43474"/>
        <note>ligand shared between dimeric partners</note>
    </ligand>
</feature>
<feature type="binding site" description="in other chain" evidence="1">
    <location>
        <position position="24"/>
    </location>
    <ligand>
        <name>phosphate</name>
        <dbReference type="ChEBI" id="CHEBI:43474"/>
        <note>ligand shared between dimeric partners</note>
    </ligand>
</feature>
<feature type="binding site" evidence="1">
    <location>
        <position position="43"/>
    </location>
    <ligand>
        <name>phosphate</name>
        <dbReference type="ChEBI" id="CHEBI:43474"/>
        <note>ligand shared between dimeric partners</note>
    </ligand>
</feature>
<feature type="binding site" description="in other chain" evidence="1">
    <location>
        <begin position="87"/>
        <end position="90"/>
    </location>
    <ligand>
        <name>phosphate</name>
        <dbReference type="ChEBI" id="CHEBI:43474"/>
        <note>ligand shared between dimeric partners</note>
    </ligand>
</feature>
<feature type="binding site" description="in other chain" evidence="1">
    <location>
        <position position="162"/>
    </location>
    <ligand>
        <name>a purine D-ribonucleoside</name>
        <dbReference type="ChEBI" id="CHEBI:142355"/>
        <note>ligand shared between dimeric partners</note>
    </ligand>
</feature>
<feature type="binding site" description="in other chain" evidence="1">
    <location>
        <begin position="179"/>
        <end position="181"/>
    </location>
    <ligand>
        <name>a purine D-ribonucleoside</name>
        <dbReference type="ChEBI" id="CHEBI:142355"/>
        <note>ligand shared between dimeric partners</note>
    </ligand>
</feature>
<feature type="binding site" description="in other chain" evidence="1">
    <location>
        <begin position="203"/>
        <end position="204"/>
    </location>
    <ligand>
        <name>a purine D-ribonucleoside</name>
        <dbReference type="ChEBI" id="CHEBI:142355"/>
        <note>ligand shared between dimeric partners</note>
    </ligand>
</feature>
<feature type="site" description="Important for catalytic activity" evidence="2">
    <location>
        <position position="217"/>
    </location>
</feature>
<sequence length="233" mass="25560">MSIHIGAKKGEIAETILLPGDPLRAKFIAENFLENIECYNEVRGMYGFTGSYKGKRISVQGTGMGMPSISIYVNELISDYGVKNLIRVGTCGAMQEEIQLRDVILAMSASTDSNMNKLRFGGMDYAPTASFRLLKKAYDVAQEKGILTRVGNVLTVDTFYNEDVNSWKKWAEFGTLAVEMETAALYTLAAKFGVDALTLLTVSDSLITGGQTTSEERQNTFMGMVKIALELAE</sequence>
<keyword id="KW-0328">Glycosyltransferase</keyword>
<keyword id="KW-1185">Reference proteome</keyword>
<keyword id="KW-0808">Transferase</keyword>
<reference key="1">
    <citation type="journal article" date="2016" name="Genome Announc.">
        <title>Complete genome sequence of Alkaliphilus metalliredigens strain QYMF, an alkaliphilic and metal-reducing bacterium isolated from borax-contaminated leachate ponds.</title>
        <authorList>
            <person name="Hwang C."/>
            <person name="Copeland A."/>
            <person name="Lucas S."/>
            <person name="Lapidus A."/>
            <person name="Barry K."/>
            <person name="Detter J.C."/>
            <person name="Glavina Del Rio T."/>
            <person name="Hammon N."/>
            <person name="Israni S."/>
            <person name="Dalin E."/>
            <person name="Tice H."/>
            <person name="Pitluck S."/>
            <person name="Chertkov O."/>
            <person name="Brettin T."/>
            <person name="Bruce D."/>
            <person name="Han C."/>
            <person name="Schmutz J."/>
            <person name="Larimer F."/>
            <person name="Land M.L."/>
            <person name="Hauser L."/>
            <person name="Kyrpides N."/>
            <person name="Mikhailova N."/>
            <person name="Ye Q."/>
            <person name="Zhou J."/>
            <person name="Richardson P."/>
            <person name="Fields M.W."/>
        </authorList>
    </citation>
    <scope>NUCLEOTIDE SEQUENCE [LARGE SCALE GENOMIC DNA]</scope>
    <source>
        <strain>QYMF</strain>
    </source>
</reference>
<protein>
    <recommendedName>
        <fullName evidence="2">Purine nucleoside phosphorylase DeoD-type</fullName>
        <shortName evidence="2">PNP</shortName>
        <ecNumber evidence="2">2.4.2.1</ecNumber>
    </recommendedName>
</protein>
<name>DEOD_ALKMQ</name>
<dbReference type="EC" id="2.4.2.1" evidence="2"/>
<dbReference type="EMBL" id="CP000724">
    <property type="protein sequence ID" value="ABR50308.1"/>
    <property type="molecule type" value="Genomic_DNA"/>
</dbReference>
<dbReference type="RefSeq" id="WP_012065256.1">
    <property type="nucleotide sequence ID" value="NC_009633.1"/>
</dbReference>
<dbReference type="SMR" id="A6TVU0"/>
<dbReference type="STRING" id="293826.Amet_4228"/>
<dbReference type="KEGG" id="amt:Amet_4228"/>
<dbReference type="eggNOG" id="COG0813">
    <property type="taxonomic scope" value="Bacteria"/>
</dbReference>
<dbReference type="HOGENOM" id="CLU_068457_2_0_9"/>
<dbReference type="OrthoDB" id="9782889at2"/>
<dbReference type="Proteomes" id="UP000001572">
    <property type="component" value="Chromosome"/>
</dbReference>
<dbReference type="GO" id="GO:0005829">
    <property type="term" value="C:cytosol"/>
    <property type="evidence" value="ECO:0007669"/>
    <property type="project" value="TreeGrafter"/>
</dbReference>
<dbReference type="GO" id="GO:0004731">
    <property type="term" value="F:purine-nucleoside phosphorylase activity"/>
    <property type="evidence" value="ECO:0007669"/>
    <property type="project" value="UniProtKB-UniRule"/>
</dbReference>
<dbReference type="GO" id="GO:0006152">
    <property type="term" value="P:purine nucleoside catabolic process"/>
    <property type="evidence" value="ECO:0007669"/>
    <property type="project" value="TreeGrafter"/>
</dbReference>
<dbReference type="CDD" id="cd09006">
    <property type="entry name" value="PNP_EcPNPI-like"/>
    <property type="match status" value="1"/>
</dbReference>
<dbReference type="Gene3D" id="3.40.50.1580">
    <property type="entry name" value="Nucleoside phosphorylase domain"/>
    <property type="match status" value="1"/>
</dbReference>
<dbReference type="HAMAP" id="MF_01627">
    <property type="entry name" value="Pur_nucleosid_phosp"/>
    <property type="match status" value="1"/>
</dbReference>
<dbReference type="InterPro" id="IPR004402">
    <property type="entry name" value="DeoD-type"/>
</dbReference>
<dbReference type="InterPro" id="IPR018016">
    <property type="entry name" value="Nucleoside_phosphorylase_CS"/>
</dbReference>
<dbReference type="InterPro" id="IPR000845">
    <property type="entry name" value="Nucleoside_phosphorylase_d"/>
</dbReference>
<dbReference type="InterPro" id="IPR035994">
    <property type="entry name" value="Nucleoside_phosphorylase_sf"/>
</dbReference>
<dbReference type="NCBIfam" id="TIGR00107">
    <property type="entry name" value="deoD"/>
    <property type="match status" value="1"/>
</dbReference>
<dbReference type="NCBIfam" id="NF004489">
    <property type="entry name" value="PRK05819.1"/>
    <property type="match status" value="1"/>
</dbReference>
<dbReference type="PANTHER" id="PTHR43691:SF11">
    <property type="entry name" value="FI09636P-RELATED"/>
    <property type="match status" value="1"/>
</dbReference>
<dbReference type="PANTHER" id="PTHR43691">
    <property type="entry name" value="URIDINE PHOSPHORYLASE"/>
    <property type="match status" value="1"/>
</dbReference>
<dbReference type="Pfam" id="PF01048">
    <property type="entry name" value="PNP_UDP_1"/>
    <property type="match status" value="1"/>
</dbReference>
<dbReference type="SUPFAM" id="SSF53167">
    <property type="entry name" value="Purine and uridine phosphorylases"/>
    <property type="match status" value="1"/>
</dbReference>
<dbReference type="PROSITE" id="PS01232">
    <property type="entry name" value="PNP_UDP_1"/>
    <property type="match status" value="1"/>
</dbReference>
<organism>
    <name type="scientific">Alkaliphilus metalliredigens (strain QYMF)</name>
    <dbReference type="NCBI Taxonomy" id="293826"/>
    <lineage>
        <taxon>Bacteria</taxon>
        <taxon>Bacillati</taxon>
        <taxon>Bacillota</taxon>
        <taxon>Clostridia</taxon>
        <taxon>Peptostreptococcales</taxon>
        <taxon>Natronincolaceae</taxon>
        <taxon>Alkaliphilus</taxon>
    </lineage>
</organism>